<reference key="1">
    <citation type="submission" date="2007-04" db="EMBL/GenBank/DDBJ databases">
        <title>Complete sequence of Roseiflexus sp. RS-1.</title>
        <authorList>
            <consortium name="US DOE Joint Genome Institute"/>
            <person name="Copeland A."/>
            <person name="Lucas S."/>
            <person name="Lapidus A."/>
            <person name="Barry K."/>
            <person name="Detter J.C."/>
            <person name="Glavina del Rio T."/>
            <person name="Hammon N."/>
            <person name="Israni S."/>
            <person name="Dalin E."/>
            <person name="Tice H."/>
            <person name="Pitluck S."/>
            <person name="Chertkov O."/>
            <person name="Brettin T."/>
            <person name="Bruce D."/>
            <person name="Han C."/>
            <person name="Schmutz J."/>
            <person name="Larimer F."/>
            <person name="Land M."/>
            <person name="Hauser L."/>
            <person name="Kyrpides N."/>
            <person name="Mikhailova N."/>
            <person name="Bryant D.A."/>
            <person name="Richardson P."/>
        </authorList>
    </citation>
    <scope>NUCLEOTIDE SEQUENCE [LARGE SCALE GENOMIC DNA]</scope>
    <source>
        <strain>RS-1</strain>
    </source>
</reference>
<gene>
    <name evidence="1" type="primary">rpmD</name>
    <name type="ordered locus">RoseRS_1167</name>
</gene>
<name>RL30_ROSS1</name>
<proteinExistence type="inferred from homology"/>
<feature type="chain" id="PRO_0000347140" description="Large ribosomal subunit protein uL30">
    <location>
        <begin position="1"/>
        <end position="78"/>
    </location>
</feature>
<feature type="region of interest" description="Disordered" evidence="2">
    <location>
        <begin position="58"/>
        <end position="78"/>
    </location>
</feature>
<feature type="compositionally biased region" description="Acidic residues" evidence="2">
    <location>
        <begin position="58"/>
        <end position="68"/>
    </location>
</feature>
<feature type="compositionally biased region" description="Basic and acidic residues" evidence="2">
    <location>
        <begin position="69"/>
        <end position="78"/>
    </location>
</feature>
<comment type="subunit">
    <text evidence="1">Part of the 50S ribosomal subunit.</text>
</comment>
<comment type="similarity">
    <text evidence="1">Belongs to the universal ribosomal protein uL30 family.</text>
</comment>
<protein>
    <recommendedName>
        <fullName evidence="1">Large ribosomal subunit protein uL30</fullName>
    </recommendedName>
    <alternativeName>
        <fullName evidence="3">50S ribosomal protein L30</fullName>
    </alternativeName>
</protein>
<organism>
    <name type="scientific">Roseiflexus sp. (strain RS-1)</name>
    <dbReference type="NCBI Taxonomy" id="357808"/>
    <lineage>
        <taxon>Bacteria</taxon>
        <taxon>Bacillati</taxon>
        <taxon>Chloroflexota</taxon>
        <taxon>Chloroflexia</taxon>
        <taxon>Chloroflexales</taxon>
        <taxon>Roseiflexineae</taxon>
        <taxon>Roseiflexaceae</taxon>
        <taxon>Roseiflexus</taxon>
    </lineage>
</organism>
<dbReference type="EMBL" id="CP000686">
    <property type="protein sequence ID" value="ABQ89574.1"/>
    <property type="molecule type" value="Genomic_DNA"/>
</dbReference>
<dbReference type="SMR" id="A5USH1"/>
<dbReference type="STRING" id="357808.RoseRS_1167"/>
<dbReference type="KEGG" id="rrs:RoseRS_1167"/>
<dbReference type="eggNOG" id="COG1841">
    <property type="taxonomic scope" value="Bacteria"/>
</dbReference>
<dbReference type="HOGENOM" id="CLU_131047_2_0_0"/>
<dbReference type="Proteomes" id="UP000006554">
    <property type="component" value="Chromosome"/>
</dbReference>
<dbReference type="GO" id="GO:0022625">
    <property type="term" value="C:cytosolic large ribosomal subunit"/>
    <property type="evidence" value="ECO:0007669"/>
    <property type="project" value="TreeGrafter"/>
</dbReference>
<dbReference type="GO" id="GO:0003735">
    <property type="term" value="F:structural constituent of ribosome"/>
    <property type="evidence" value="ECO:0007669"/>
    <property type="project" value="InterPro"/>
</dbReference>
<dbReference type="GO" id="GO:0006412">
    <property type="term" value="P:translation"/>
    <property type="evidence" value="ECO:0007669"/>
    <property type="project" value="UniProtKB-UniRule"/>
</dbReference>
<dbReference type="CDD" id="cd01658">
    <property type="entry name" value="Ribosomal_L30"/>
    <property type="match status" value="1"/>
</dbReference>
<dbReference type="FunFam" id="3.30.1390.20:FF:000001">
    <property type="entry name" value="50S ribosomal protein L30"/>
    <property type="match status" value="1"/>
</dbReference>
<dbReference type="Gene3D" id="3.30.1390.20">
    <property type="entry name" value="Ribosomal protein L30, ferredoxin-like fold domain"/>
    <property type="match status" value="1"/>
</dbReference>
<dbReference type="HAMAP" id="MF_01371_B">
    <property type="entry name" value="Ribosomal_uL30_B"/>
    <property type="match status" value="1"/>
</dbReference>
<dbReference type="InterPro" id="IPR036919">
    <property type="entry name" value="Ribo_uL30_ferredoxin-like_sf"/>
</dbReference>
<dbReference type="InterPro" id="IPR005996">
    <property type="entry name" value="Ribosomal_uL30_bac-type"/>
</dbReference>
<dbReference type="InterPro" id="IPR018038">
    <property type="entry name" value="Ribosomal_uL30_CS"/>
</dbReference>
<dbReference type="InterPro" id="IPR016082">
    <property type="entry name" value="Ribosomal_uL30_ferredoxin-like"/>
</dbReference>
<dbReference type="NCBIfam" id="TIGR01308">
    <property type="entry name" value="rpmD_bact"/>
    <property type="match status" value="1"/>
</dbReference>
<dbReference type="PANTHER" id="PTHR15892:SF2">
    <property type="entry name" value="LARGE RIBOSOMAL SUBUNIT PROTEIN UL30M"/>
    <property type="match status" value="1"/>
</dbReference>
<dbReference type="PANTHER" id="PTHR15892">
    <property type="entry name" value="MITOCHONDRIAL RIBOSOMAL PROTEIN L30"/>
    <property type="match status" value="1"/>
</dbReference>
<dbReference type="Pfam" id="PF00327">
    <property type="entry name" value="Ribosomal_L30"/>
    <property type="match status" value="1"/>
</dbReference>
<dbReference type="SUPFAM" id="SSF55129">
    <property type="entry name" value="Ribosomal protein L30p/L7e"/>
    <property type="match status" value="1"/>
</dbReference>
<dbReference type="PROSITE" id="PS00634">
    <property type="entry name" value="RIBOSOMAL_L30"/>
    <property type="match status" value="1"/>
</dbReference>
<sequence>MKITYRKSAIGYSRDQKATIRSLGLRRLNSVVIHDDTPTIRGMVFKVRHLVSVEEIADDTSPDAETGADLERDGGNRS</sequence>
<keyword id="KW-0687">Ribonucleoprotein</keyword>
<keyword id="KW-0689">Ribosomal protein</keyword>
<evidence type="ECO:0000255" key="1">
    <source>
        <dbReference type="HAMAP-Rule" id="MF_01371"/>
    </source>
</evidence>
<evidence type="ECO:0000256" key="2">
    <source>
        <dbReference type="SAM" id="MobiDB-lite"/>
    </source>
</evidence>
<evidence type="ECO:0000305" key="3"/>
<accession>A5USH1</accession>